<evidence type="ECO:0000255" key="1">
    <source>
        <dbReference type="HAMAP-Rule" id="MF_00508"/>
    </source>
</evidence>
<evidence type="ECO:0000305" key="2"/>
<sequence>MNGQNIRIRLKAFDHRILDASTREIVATAKRTGAQVRGPIPLPTRIEKFTVNRSPHIDKKSREQFEMRTHKRLLDIVDPTPQTVDALMKLDLAAGVDVEIKL</sequence>
<reference key="1">
    <citation type="submission" date="2007-04" db="EMBL/GenBank/DDBJ databases">
        <title>Complete genome sequence of the nitrogen-fixing bacterium Azorhizobium caulinodans ORS571.</title>
        <authorList>
            <person name="Lee K.B."/>
            <person name="Backer P.D."/>
            <person name="Aono T."/>
            <person name="Liu C.T."/>
            <person name="Suzuki S."/>
            <person name="Suzuki T."/>
            <person name="Kaneko T."/>
            <person name="Yamada M."/>
            <person name="Tabata S."/>
            <person name="Kupfer D.M."/>
            <person name="Najar F.Z."/>
            <person name="Wiley G.B."/>
            <person name="Roe B."/>
            <person name="Binnewies T."/>
            <person name="Ussery D."/>
            <person name="Vereecke D."/>
            <person name="Gevers D."/>
            <person name="Holsters M."/>
            <person name="Oyaizu H."/>
        </authorList>
    </citation>
    <scope>NUCLEOTIDE SEQUENCE [LARGE SCALE GENOMIC DNA]</scope>
    <source>
        <strain>ATCC 43989 / DSM 5975 / JCM 20966 / LMG 6465 / NBRC 14845 / NCIMB 13405 / ORS 571</strain>
    </source>
</reference>
<gene>
    <name evidence="1" type="primary">rpsJ</name>
    <name type="ordered locus">AZC_2555</name>
</gene>
<organism>
    <name type="scientific">Azorhizobium caulinodans (strain ATCC 43989 / DSM 5975 / JCM 20966 / LMG 6465 / NBRC 14845 / NCIMB 13405 / ORS 571)</name>
    <dbReference type="NCBI Taxonomy" id="438753"/>
    <lineage>
        <taxon>Bacteria</taxon>
        <taxon>Pseudomonadati</taxon>
        <taxon>Pseudomonadota</taxon>
        <taxon>Alphaproteobacteria</taxon>
        <taxon>Hyphomicrobiales</taxon>
        <taxon>Xanthobacteraceae</taxon>
        <taxon>Azorhizobium</taxon>
    </lineage>
</organism>
<accession>A8IAS9</accession>
<comment type="function">
    <text evidence="1">Involved in the binding of tRNA to the ribosomes.</text>
</comment>
<comment type="subunit">
    <text evidence="1">Part of the 30S ribosomal subunit.</text>
</comment>
<comment type="similarity">
    <text evidence="1">Belongs to the universal ribosomal protein uS10 family.</text>
</comment>
<keyword id="KW-1185">Reference proteome</keyword>
<keyword id="KW-0687">Ribonucleoprotein</keyword>
<keyword id="KW-0689">Ribosomal protein</keyword>
<dbReference type="EMBL" id="AP009384">
    <property type="protein sequence ID" value="BAF88553.1"/>
    <property type="molecule type" value="Genomic_DNA"/>
</dbReference>
<dbReference type="RefSeq" id="WP_012113701.1">
    <property type="nucleotide sequence ID" value="NC_009937.1"/>
</dbReference>
<dbReference type="SMR" id="A8IAS9"/>
<dbReference type="STRING" id="438753.AZC_2555"/>
<dbReference type="GeneID" id="95772537"/>
<dbReference type="KEGG" id="azc:AZC_2555"/>
<dbReference type="eggNOG" id="COG0051">
    <property type="taxonomic scope" value="Bacteria"/>
</dbReference>
<dbReference type="HOGENOM" id="CLU_122625_1_3_5"/>
<dbReference type="Proteomes" id="UP000000270">
    <property type="component" value="Chromosome"/>
</dbReference>
<dbReference type="GO" id="GO:1990904">
    <property type="term" value="C:ribonucleoprotein complex"/>
    <property type="evidence" value="ECO:0007669"/>
    <property type="project" value="UniProtKB-KW"/>
</dbReference>
<dbReference type="GO" id="GO:0005840">
    <property type="term" value="C:ribosome"/>
    <property type="evidence" value="ECO:0007669"/>
    <property type="project" value="UniProtKB-KW"/>
</dbReference>
<dbReference type="GO" id="GO:0003735">
    <property type="term" value="F:structural constituent of ribosome"/>
    <property type="evidence" value="ECO:0007669"/>
    <property type="project" value="InterPro"/>
</dbReference>
<dbReference type="GO" id="GO:0000049">
    <property type="term" value="F:tRNA binding"/>
    <property type="evidence" value="ECO:0007669"/>
    <property type="project" value="UniProtKB-UniRule"/>
</dbReference>
<dbReference type="GO" id="GO:0006412">
    <property type="term" value="P:translation"/>
    <property type="evidence" value="ECO:0007669"/>
    <property type="project" value="UniProtKB-UniRule"/>
</dbReference>
<dbReference type="FunFam" id="3.30.70.600:FF:000001">
    <property type="entry name" value="30S ribosomal protein S10"/>
    <property type="match status" value="1"/>
</dbReference>
<dbReference type="Gene3D" id="3.30.70.600">
    <property type="entry name" value="Ribosomal protein S10 domain"/>
    <property type="match status" value="1"/>
</dbReference>
<dbReference type="HAMAP" id="MF_00508">
    <property type="entry name" value="Ribosomal_uS10"/>
    <property type="match status" value="1"/>
</dbReference>
<dbReference type="InterPro" id="IPR001848">
    <property type="entry name" value="Ribosomal_uS10"/>
</dbReference>
<dbReference type="InterPro" id="IPR018268">
    <property type="entry name" value="Ribosomal_uS10_CS"/>
</dbReference>
<dbReference type="InterPro" id="IPR027486">
    <property type="entry name" value="Ribosomal_uS10_dom"/>
</dbReference>
<dbReference type="InterPro" id="IPR036838">
    <property type="entry name" value="Ribosomal_uS10_dom_sf"/>
</dbReference>
<dbReference type="NCBIfam" id="NF001861">
    <property type="entry name" value="PRK00596.1"/>
    <property type="match status" value="1"/>
</dbReference>
<dbReference type="NCBIfam" id="TIGR01049">
    <property type="entry name" value="rpsJ_bact"/>
    <property type="match status" value="1"/>
</dbReference>
<dbReference type="PANTHER" id="PTHR11700">
    <property type="entry name" value="30S RIBOSOMAL PROTEIN S10 FAMILY MEMBER"/>
    <property type="match status" value="1"/>
</dbReference>
<dbReference type="Pfam" id="PF00338">
    <property type="entry name" value="Ribosomal_S10"/>
    <property type="match status" value="1"/>
</dbReference>
<dbReference type="PRINTS" id="PR00971">
    <property type="entry name" value="RIBOSOMALS10"/>
</dbReference>
<dbReference type="SMART" id="SM01403">
    <property type="entry name" value="Ribosomal_S10"/>
    <property type="match status" value="1"/>
</dbReference>
<dbReference type="SUPFAM" id="SSF54999">
    <property type="entry name" value="Ribosomal protein S10"/>
    <property type="match status" value="1"/>
</dbReference>
<dbReference type="PROSITE" id="PS00361">
    <property type="entry name" value="RIBOSOMAL_S10"/>
    <property type="match status" value="1"/>
</dbReference>
<protein>
    <recommendedName>
        <fullName evidence="1">Small ribosomal subunit protein uS10</fullName>
    </recommendedName>
    <alternativeName>
        <fullName evidence="2">30S ribosomal protein S10</fullName>
    </alternativeName>
</protein>
<name>RS10_AZOC5</name>
<proteinExistence type="inferred from homology"/>
<feature type="chain" id="PRO_1000072459" description="Small ribosomal subunit protein uS10">
    <location>
        <begin position="1"/>
        <end position="102"/>
    </location>
</feature>